<protein>
    <recommendedName>
        <fullName evidence="1">2-dehydro-3-deoxyphosphooctonate aldolase</fullName>
        <ecNumber evidence="1">2.5.1.55</ecNumber>
    </recommendedName>
    <alternativeName>
        <fullName evidence="1">3-deoxy-D-manno-octulosonic acid 8-phosphate synthase</fullName>
    </alternativeName>
    <alternativeName>
        <fullName evidence="1">KDO-8-phosphate synthase</fullName>
        <shortName evidence="1">KDO 8-P synthase</shortName>
        <shortName evidence="1">KDOPS</shortName>
    </alternativeName>
    <alternativeName>
        <fullName evidence="1">Phospho-2-dehydro-3-deoxyoctonate aldolase</fullName>
    </alternativeName>
</protein>
<feature type="chain" id="PRO_1000116873" description="2-dehydro-3-deoxyphosphooctonate aldolase">
    <location>
        <begin position="1"/>
        <end position="281"/>
    </location>
</feature>
<sequence>MRLCGFEAGLQHPFFLMAGPCAIESESLALRTAEDLRDICARLGIPFIYKSSYDKANRSSGQSFRGPGMDEGLRILEKVRREVGVPVVTDVHEKEDVSAVAEVVDVLQTPAFLCRQTDFIQAVAAAGKPVNIKKGQFLAPWDMLHVASKAKATGNEQIMVCERGASFGYNNLVSDMRSLAVMRQTGCPVVFDATHSVQLPGGQGDRSGGQREFIPVLARAAVAAGVSGLFMETHPNPADALSDGPNAWPLGRMEDLLRILQHIDHVVKNQDFPENYPEELV</sequence>
<gene>
    <name evidence="1" type="primary">kdsA</name>
    <name type="ordered locus">AFE_0848</name>
</gene>
<proteinExistence type="inferred from homology"/>
<reference key="1">
    <citation type="journal article" date="2008" name="BMC Genomics">
        <title>Acidithiobacillus ferrooxidans metabolism: from genome sequence to industrial applications.</title>
        <authorList>
            <person name="Valdes J."/>
            <person name="Pedroso I."/>
            <person name="Quatrini R."/>
            <person name="Dodson R.J."/>
            <person name="Tettelin H."/>
            <person name="Blake R. II"/>
            <person name="Eisen J.A."/>
            <person name="Holmes D.S."/>
        </authorList>
    </citation>
    <scope>NUCLEOTIDE SEQUENCE [LARGE SCALE GENOMIC DNA]</scope>
    <source>
        <strain>ATCC 23270 / DSM 14882 / CIP 104768 / NCIMB 8455</strain>
    </source>
</reference>
<keyword id="KW-0963">Cytoplasm</keyword>
<keyword id="KW-0448">Lipopolysaccharide biosynthesis</keyword>
<keyword id="KW-1185">Reference proteome</keyword>
<keyword id="KW-0808">Transferase</keyword>
<organism>
    <name type="scientific">Acidithiobacillus ferrooxidans (strain ATCC 23270 / DSM 14882 / CIP 104768 / NCIMB 8455)</name>
    <name type="common">Ferrobacillus ferrooxidans (strain ATCC 23270)</name>
    <dbReference type="NCBI Taxonomy" id="243159"/>
    <lineage>
        <taxon>Bacteria</taxon>
        <taxon>Pseudomonadati</taxon>
        <taxon>Pseudomonadota</taxon>
        <taxon>Acidithiobacillia</taxon>
        <taxon>Acidithiobacillales</taxon>
        <taxon>Acidithiobacillaceae</taxon>
        <taxon>Acidithiobacillus</taxon>
    </lineage>
</organism>
<accession>B7J6R3</accession>
<dbReference type="EC" id="2.5.1.55" evidence="1"/>
<dbReference type="EMBL" id="CP001219">
    <property type="protein sequence ID" value="ACK78606.1"/>
    <property type="molecule type" value="Genomic_DNA"/>
</dbReference>
<dbReference type="RefSeq" id="WP_012536391.1">
    <property type="nucleotide sequence ID" value="NC_011761.1"/>
</dbReference>
<dbReference type="SMR" id="B7J6R3"/>
<dbReference type="STRING" id="243159.AFE_0848"/>
<dbReference type="PaxDb" id="243159-AFE_0848"/>
<dbReference type="GeneID" id="65280175"/>
<dbReference type="KEGG" id="afr:AFE_0848"/>
<dbReference type="eggNOG" id="COG2877">
    <property type="taxonomic scope" value="Bacteria"/>
</dbReference>
<dbReference type="HOGENOM" id="CLU_036666_0_0_6"/>
<dbReference type="UniPathway" id="UPA00030"/>
<dbReference type="UniPathway" id="UPA00357">
    <property type="reaction ID" value="UER00474"/>
</dbReference>
<dbReference type="Proteomes" id="UP000001362">
    <property type="component" value="Chromosome"/>
</dbReference>
<dbReference type="GO" id="GO:0005737">
    <property type="term" value="C:cytoplasm"/>
    <property type="evidence" value="ECO:0007669"/>
    <property type="project" value="UniProtKB-SubCell"/>
</dbReference>
<dbReference type="GO" id="GO:0008676">
    <property type="term" value="F:3-deoxy-8-phosphooctulonate synthase activity"/>
    <property type="evidence" value="ECO:0007669"/>
    <property type="project" value="UniProtKB-UniRule"/>
</dbReference>
<dbReference type="GO" id="GO:0019294">
    <property type="term" value="P:keto-3-deoxy-D-manno-octulosonic acid biosynthetic process"/>
    <property type="evidence" value="ECO:0007669"/>
    <property type="project" value="UniProtKB-UniRule"/>
</dbReference>
<dbReference type="Gene3D" id="3.20.20.70">
    <property type="entry name" value="Aldolase class I"/>
    <property type="match status" value="1"/>
</dbReference>
<dbReference type="HAMAP" id="MF_00056">
    <property type="entry name" value="KDO8P_synth"/>
    <property type="match status" value="1"/>
</dbReference>
<dbReference type="InterPro" id="IPR013785">
    <property type="entry name" value="Aldolase_TIM"/>
</dbReference>
<dbReference type="InterPro" id="IPR006218">
    <property type="entry name" value="DAHP1/KDSA"/>
</dbReference>
<dbReference type="InterPro" id="IPR006269">
    <property type="entry name" value="KDO8P_synthase"/>
</dbReference>
<dbReference type="NCBIfam" id="TIGR01362">
    <property type="entry name" value="KDO8P_synth"/>
    <property type="match status" value="1"/>
</dbReference>
<dbReference type="NCBIfam" id="NF003543">
    <property type="entry name" value="PRK05198.1"/>
    <property type="match status" value="1"/>
</dbReference>
<dbReference type="PANTHER" id="PTHR21057">
    <property type="entry name" value="PHOSPHO-2-DEHYDRO-3-DEOXYHEPTONATE ALDOLASE"/>
    <property type="match status" value="1"/>
</dbReference>
<dbReference type="Pfam" id="PF00793">
    <property type="entry name" value="DAHP_synth_1"/>
    <property type="match status" value="1"/>
</dbReference>
<dbReference type="SUPFAM" id="SSF51569">
    <property type="entry name" value="Aldolase"/>
    <property type="match status" value="1"/>
</dbReference>
<name>KDSA_ACIF2</name>
<evidence type="ECO:0000255" key="1">
    <source>
        <dbReference type="HAMAP-Rule" id="MF_00056"/>
    </source>
</evidence>
<comment type="catalytic activity">
    <reaction evidence="1">
        <text>D-arabinose 5-phosphate + phosphoenolpyruvate + H2O = 3-deoxy-alpha-D-manno-2-octulosonate-8-phosphate + phosphate</text>
        <dbReference type="Rhea" id="RHEA:14053"/>
        <dbReference type="ChEBI" id="CHEBI:15377"/>
        <dbReference type="ChEBI" id="CHEBI:43474"/>
        <dbReference type="ChEBI" id="CHEBI:57693"/>
        <dbReference type="ChEBI" id="CHEBI:58702"/>
        <dbReference type="ChEBI" id="CHEBI:85985"/>
        <dbReference type="EC" id="2.5.1.55"/>
    </reaction>
</comment>
<comment type="pathway">
    <text evidence="1">Carbohydrate biosynthesis; 3-deoxy-D-manno-octulosonate biosynthesis; 3-deoxy-D-manno-octulosonate from D-ribulose 5-phosphate: step 2/3.</text>
</comment>
<comment type="pathway">
    <text evidence="1">Bacterial outer membrane biogenesis; lipopolysaccharide biosynthesis.</text>
</comment>
<comment type="subcellular location">
    <subcellularLocation>
        <location evidence="1">Cytoplasm</location>
    </subcellularLocation>
</comment>
<comment type="similarity">
    <text evidence="1">Belongs to the KdsA family.</text>
</comment>